<keyword id="KW-0002">3D-structure</keyword>
<keyword id="KW-0016">Alginate biosynthesis</keyword>
<keyword id="KW-0067">ATP-binding</keyword>
<keyword id="KW-0997">Cell inner membrane</keyword>
<keyword id="KW-1003">Cell membrane</keyword>
<keyword id="KW-0418">Kinase</keyword>
<keyword id="KW-0472">Membrane</keyword>
<keyword id="KW-0547">Nucleotide-binding</keyword>
<keyword id="KW-0597">Phosphoprotein</keyword>
<keyword id="KW-0716">Sensory transduction</keyword>
<keyword id="KW-0808">Transferase</keyword>
<keyword id="KW-0812">Transmembrane</keyword>
<keyword id="KW-1133">Transmembrane helix</keyword>
<comment type="function">
    <text evidence="4">Member of the two-component regulatory system AlgB/KinB involved in regulation of alginate biosynthesis genes. KinB functions as a membrane-associated protein kinase that phosphorylates AlgB, probably in response to environmental signals.</text>
</comment>
<comment type="catalytic activity">
    <reaction evidence="4">
        <text>ATP + protein L-histidine = ADP + protein N-phospho-L-histidine.</text>
        <dbReference type="EC" id="2.7.13.3"/>
    </reaction>
</comment>
<comment type="subcellular location">
    <subcellularLocation>
        <location evidence="4">Cell inner membrane</location>
        <topology evidence="1">Multi-pass membrane protein</topology>
    </subcellularLocation>
</comment>
<comment type="PTM">
    <text evidence="4">Autophosphorylated.</text>
</comment>
<accession>O34206</accession>
<feature type="chain" id="PRO_0000074778" description="Alginate biosynthesis sensor protein KinB">
    <location>
        <begin position="1"/>
        <end position="595"/>
    </location>
</feature>
<feature type="topological domain" description="Cytoplasmic" evidence="6">
    <location>
        <begin position="1"/>
        <end position="12"/>
    </location>
</feature>
<feature type="transmembrane region" description="Helical" evidence="1">
    <location>
        <begin position="13"/>
        <end position="33"/>
    </location>
</feature>
<feature type="topological domain" description="Periplasmic" evidence="6">
    <location>
        <begin position="34"/>
        <end position="167"/>
    </location>
</feature>
<feature type="transmembrane region" description="Helical" evidence="1">
    <location>
        <begin position="168"/>
        <end position="188"/>
    </location>
</feature>
<feature type="topological domain" description="Cytoplasmic" evidence="6">
    <location>
        <begin position="189"/>
        <end position="595"/>
    </location>
</feature>
<feature type="domain" description="HAMP" evidence="2">
    <location>
        <begin position="195"/>
        <end position="247"/>
    </location>
</feature>
<feature type="domain" description="PAS" evidence="5">
    <location>
        <begin position="258"/>
        <end position="323"/>
    </location>
</feature>
<feature type="domain" description="PAC" evidence="5">
    <location>
        <begin position="327"/>
        <end position="369"/>
    </location>
</feature>
<feature type="domain" description="Histidine kinase" evidence="3">
    <location>
        <begin position="382"/>
        <end position="595"/>
    </location>
</feature>
<feature type="modified residue" description="Phosphohistidine; by autocatalysis" evidence="3 4">
    <location>
        <position position="385"/>
    </location>
</feature>
<feature type="mutagenesis site" description="Loss of autophosphorylation." evidence="4">
    <original>H</original>
    <variation>K</variation>
    <variation>Q</variation>
    <location>
        <position position="385"/>
    </location>
</feature>
<feature type="mutagenesis site" description="Loss of autophosphorylation." evidence="4">
    <original>N</original>
    <variation>Q</variation>
    <location>
        <position position="504"/>
    </location>
</feature>
<feature type="mutagenesis site" description="Loss of autophosphorylation." evidence="4">
    <original>D</original>
    <variation>E</variation>
    <location>
        <position position="532"/>
    </location>
</feature>
<feature type="mutagenesis site" description="Residual autophosphorylation." evidence="4">
    <original>D</original>
    <variation>N</variation>
    <location>
        <position position="532"/>
    </location>
</feature>
<feature type="mutagenesis site" description="Loss of autophosphorylation." evidence="4">
    <original>G</original>
    <variation>A</variation>
    <location>
        <position position="560"/>
    </location>
</feature>
<feature type="helix" evidence="7">
    <location>
        <begin position="42"/>
        <end position="70"/>
    </location>
</feature>
<feature type="strand" evidence="7">
    <location>
        <begin position="72"/>
        <end position="74"/>
    </location>
</feature>
<feature type="helix" evidence="7">
    <location>
        <begin position="77"/>
        <end position="97"/>
    </location>
</feature>
<feature type="helix" evidence="7">
    <location>
        <begin position="101"/>
        <end position="118"/>
    </location>
</feature>
<feature type="helix" evidence="7">
    <location>
        <begin position="121"/>
        <end position="126"/>
    </location>
</feature>
<feature type="strand" evidence="7">
    <location>
        <begin position="131"/>
        <end position="133"/>
    </location>
</feature>
<feature type="helix" evidence="7">
    <location>
        <begin position="134"/>
        <end position="162"/>
    </location>
</feature>
<gene>
    <name type="primary">kinB</name>
</gene>
<organism>
    <name type="scientific">Pseudomonas aeruginosa</name>
    <dbReference type="NCBI Taxonomy" id="287"/>
    <lineage>
        <taxon>Bacteria</taxon>
        <taxon>Pseudomonadati</taxon>
        <taxon>Pseudomonadota</taxon>
        <taxon>Gammaproteobacteria</taxon>
        <taxon>Pseudomonadales</taxon>
        <taxon>Pseudomonadaceae</taxon>
        <taxon>Pseudomonas</taxon>
    </lineage>
</organism>
<dbReference type="EC" id="2.7.13.3" evidence="4"/>
<dbReference type="EMBL" id="U97063">
    <property type="protein sequence ID" value="AAB68790.1"/>
    <property type="molecule type" value="Genomic_DNA"/>
</dbReference>
<dbReference type="PDB" id="3KKB">
    <property type="method" value="X-ray"/>
    <property type="resolution" value="1.88 A"/>
    <property type="chains" value="A/B=41-168"/>
</dbReference>
<dbReference type="PDBsum" id="3KKB"/>
<dbReference type="SMR" id="O34206"/>
<dbReference type="iPTMnet" id="O34206"/>
<dbReference type="eggNOG" id="COG5002">
    <property type="taxonomic scope" value="Bacteria"/>
</dbReference>
<dbReference type="BRENDA" id="2.7.13.3">
    <property type="organism ID" value="5087"/>
</dbReference>
<dbReference type="EvolutionaryTrace" id="O34206"/>
<dbReference type="GO" id="GO:0005886">
    <property type="term" value="C:plasma membrane"/>
    <property type="evidence" value="ECO:0007669"/>
    <property type="project" value="UniProtKB-SubCell"/>
</dbReference>
<dbReference type="GO" id="GO:0005524">
    <property type="term" value="F:ATP binding"/>
    <property type="evidence" value="ECO:0007669"/>
    <property type="project" value="UniProtKB-KW"/>
</dbReference>
<dbReference type="GO" id="GO:0000155">
    <property type="term" value="F:phosphorelay sensor kinase activity"/>
    <property type="evidence" value="ECO:0007669"/>
    <property type="project" value="InterPro"/>
</dbReference>
<dbReference type="GO" id="GO:0042121">
    <property type="term" value="P:alginic acid biosynthetic process"/>
    <property type="evidence" value="ECO:0007669"/>
    <property type="project" value="UniProtKB-KW"/>
</dbReference>
<dbReference type="CDD" id="cd06225">
    <property type="entry name" value="HAMP"/>
    <property type="match status" value="1"/>
</dbReference>
<dbReference type="CDD" id="cd00075">
    <property type="entry name" value="HATPase"/>
    <property type="match status" value="1"/>
</dbReference>
<dbReference type="CDD" id="cd00082">
    <property type="entry name" value="HisKA"/>
    <property type="match status" value="1"/>
</dbReference>
<dbReference type="CDD" id="cd19409">
    <property type="entry name" value="KinB_sensor"/>
    <property type="match status" value="1"/>
</dbReference>
<dbReference type="CDD" id="cd00130">
    <property type="entry name" value="PAS"/>
    <property type="match status" value="1"/>
</dbReference>
<dbReference type="FunFam" id="3.30.565.10:FF:000006">
    <property type="entry name" value="Sensor histidine kinase WalK"/>
    <property type="match status" value="1"/>
</dbReference>
<dbReference type="Gene3D" id="1.10.287.130">
    <property type="match status" value="1"/>
</dbReference>
<dbReference type="Gene3D" id="1.10.8.500">
    <property type="entry name" value="HAMP domain in histidine kinase"/>
    <property type="match status" value="1"/>
</dbReference>
<dbReference type="Gene3D" id="1.20.120.880">
    <property type="entry name" value="Histidine kinase (KinB), sensor domain"/>
    <property type="match status" value="1"/>
</dbReference>
<dbReference type="Gene3D" id="3.30.565.10">
    <property type="entry name" value="Histidine kinase-like ATPase, C-terminal domain"/>
    <property type="match status" value="1"/>
</dbReference>
<dbReference type="Gene3D" id="3.30.450.20">
    <property type="entry name" value="PAS domain"/>
    <property type="match status" value="1"/>
</dbReference>
<dbReference type="InterPro" id="IPR050980">
    <property type="entry name" value="2C_sensor_his_kinase"/>
</dbReference>
<dbReference type="InterPro" id="IPR003660">
    <property type="entry name" value="HAMP_dom"/>
</dbReference>
<dbReference type="InterPro" id="IPR036890">
    <property type="entry name" value="HATPase_C_sf"/>
</dbReference>
<dbReference type="InterPro" id="IPR005467">
    <property type="entry name" value="His_kinase_dom"/>
</dbReference>
<dbReference type="InterPro" id="IPR003661">
    <property type="entry name" value="HisK_dim/P_dom"/>
</dbReference>
<dbReference type="InterPro" id="IPR036097">
    <property type="entry name" value="HisK_dim/P_sf"/>
</dbReference>
<dbReference type="InterPro" id="IPR038320">
    <property type="entry name" value="KinB_N_sf"/>
</dbReference>
<dbReference type="InterPro" id="IPR031909">
    <property type="entry name" value="KinB_sensor_dom"/>
</dbReference>
<dbReference type="InterPro" id="IPR000014">
    <property type="entry name" value="PAS"/>
</dbReference>
<dbReference type="InterPro" id="IPR035965">
    <property type="entry name" value="PAS-like_dom_sf"/>
</dbReference>
<dbReference type="InterPro" id="IPR013656">
    <property type="entry name" value="PAS_4"/>
</dbReference>
<dbReference type="InterPro" id="IPR004358">
    <property type="entry name" value="Sig_transdc_His_kin-like_C"/>
</dbReference>
<dbReference type="NCBIfam" id="TIGR00229">
    <property type="entry name" value="sensory_box"/>
    <property type="match status" value="1"/>
</dbReference>
<dbReference type="PANTHER" id="PTHR44936">
    <property type="entry name" value="SENSOR PROTEIN CREC"/>
    <property type="match status" value="1"/>
</dbReference>
<dbReference type="PANTHER" id="PTHR44936:SF10">
    <property type="entry name" value="SENSOR PROTEIN RSTB"/>
    <property type="match status" value="1"/>
</dbReference>
<dbReference type="Pfam" id="PF00672">
    <property type="entry name" value="HAMP"/>
    <property type="match status" value="1"/>
</dbReference>
<dbReference type="Pfam" id="PF02518">
    <property type="entry name" value="HATPase_c"/>
    <property type="match status" value="1"/>
</dbReference>
<dbReference type="Pfam" id="PF00512">
    <property type="entry name" value="HisKA"/>
    <property type="match status" value="1"/>
</dbReference>
<dbReference type="Pfam" id="PF16767">
    <property type="entry name" value="KinB_sensor"/>
    <property type="match status" value="1"/>
</dbReference>
<dbReference type="Pfam" id="PF08448">
    <property type="entry name" value="PAS_4"/>
    <property type="match status" value="1"/>
</dbReference>
<dbReference type="PRINTS" id="PR00344">
    <property type="entry name" value="BCTRLSENSOR"/>
</dbReference>
<dbReference type="SMART" id="SM00304">
    <property type="entry name" value="HAMP"/>
    <property type="match status" value="1"/>
</dbReference>
<dbReference type="SMART" id="SM00387">
    <property type="entry name" value="HATPase_c"/>
    <property type="match status" value="1"/>
</dbReference>
<dbReference type="SMART" id="SM00388">
    <property type="entry name" value="HisKA"/>
    <property type="match status" value="1"/>
</dbReference>
<dbReference type="SMART" id="SM00091">
    <property type="entry name" value="PAS"/>
    <property type="match status" value="1"/>
</dbReference>
<dbReference type="SUPFAM" id="SSF55874">
    <property type="entry name" value="ATPase domain of HSP90 chaperone/DNA topoisomerase II/histidine kinase"/>
    <property type="match status" value="1"/>
</dbReference>
<dbReference type="SUPFAM" id="SSF158472">
    <property type="entry name" value="HAMP domain-like"/>
    <property type="match status" value="1"/>
</dbReference>
<dbReference type="SUPFAM" id="SSF47384">
    <property type="entry name" value="Homodimeric domain of signal transducing histidine kinase"/>
    <property type="match status" value="1"/>
</dbReference>
<dbReference type="SUPFAM" id="SSF55785">
    <property type="entry name" value="PYP-like sensor domain (PAS domain)"/>
    <property type="match status" value="1"/>
</dbReference>
<dbReference type="PROSITE" id="PS50885">
    <property type="entry name" value="HAMP"/>
    <property type="match status" value="1"/>
</dbReference>
<dbReference type="PROSITE" id="PS50109">
    <property type="entry name" value="HIS_KIN"/>
    <property type="match status" value="1"/>
</dbReference>
<proteinExistence type="evidence at protein level"/>
<sequence length="595" mass="66072">MSMPLPMKLRTRLFLSISALITVSLFGLLLGLFSVMQLGRAQEQRMSHHYATIEVSQQLRQLLGDQLVILLRETPDGQALERSQNDFRRVLEQGRANTVDSAEQAALDGVRDAYLQLQAHTPALLEAPMVDNDGFSEAFNGLRLRLQDLQQLALAGISDAETSARHRAYLVAGLLGLVGVAILLIGFVTAHSIARRFGAPIETLARAADRIGEGDFDVTLPMTNVAEVGQLTRRFGLMAEALRQYRKTSVEEVLSGERRLQAVLDSIDDGLVIFDNQGRIEHANPVAIRQLFVSNDPHGKRIDEILSDVDVQEAVEKALLGEVQDEAMPDLVVDVAGESRLLAWSLYPVTHPGGHSVGAVLVVRDVTEQRAFERVRSEFVLRASHELRTPVTGMQMAFSLLRERLDFPAESREADLIQTVDEEMSRLVLLINDLLNFSRYQTGMQKLELASCDLVDLLTQAQQRFIPKGEARRVSLQLELGDELPRLQLDRLQIERVIDNLLENALRHSSEGGQIHLQARRQGDRVLIAVEDNGEGIPFSQQGRIFEPFVQVGRKKGGAGLGLELCKEIIQLHGGRIAVRSQPGQGARFYMLLPV</sequence>
<protein>
    <recommendedName>
        <fullName evidence="5">Alginate biosynthesis sensor protein KinB</fullName>
        <ecNumber evidence="4">2.7.13.3</ecNumber>
    </recommendedName>
</protein>
<reference key="1">
    <citation type="journal article" date="1997" name="J. Biol. Chem.">
        <title>Identification of the histidine protein kinase kinB in Pseudomonas aeruginosa and its phosphorylation of the alginate regulator algB.</title>
        <authorList>
            <person name="Ma S."/>
            <person name="Wozniak D.J."/>
            <person name="Ohman D.E."/>
        </authorList>
    </citation>
    <scope>NUCLEOTIDE SEQUENCE [GENOMIC DNA]</scope>
    <scope>FUNCTION</scope>
    <scope>CATALYTIC ACTIVITY</scope>
    <scope>SUBCELLULAR LOCATION</scope>
    <scope>TOPOLOGY</scope>
    <scope>PHOSPHORYLATION AT HIS-385</scope>
    <scope>MUTAGENESIS OF HIS-385; ASN-504; ASP-532 AND GLY-560</scope>
    <source>
        <strain>FRD444</strain>
    </source>
</reference>
<name>KINB_PSEAI</name>
<evidence type="ECO:0000255" key="1"/>
<evidence type="ECO:0000255" key="2">
    <source>
        <dbReference type="PROSITE-ProRule" id="PRU00102"/>
    </source>
</evidence>
<evidence type="ECO:0000255" key="3">
    <source>
        <dbReference type="PROSITE-ProRule" id="PRU00107"/>
    </source>
</evidence>
<evidence type="ECO:0000269" key="4">
    <source>
    </source>
</evidence>
<evidence type="ECO:0000305" key="5"/>
<evidence type="ECO:0000305" key="6">
    <source>
    </source>
</evidence>
<evidence type="ECO:0007829" key="7">
    <source>
        <dbReference type="PDB" id="3KKB"/>
    </source>
</evidence>